<keyword id="KW-0687">Ribonucleoprotein</keyword>
<keyword id="KW-0689">Ribosomal protein</keyword>
<keyword id="KW-0694">RNA-binding</keyword>
<keyword id="KW-0699">rRNA-binding</keyword>
<keyword id="KW-0820">tRNA-binding</keyword>
<sequence>MSRLKKLYTEEIRKTLQEKFGYSNTMQIPVLKKIVISMGLAEAAKDKNLFQAHLDELSMISGQKPLVTKARNSIAGFKLREGQGIGAKVTLRGQRMYDFMDRFCHIVSPRIRDFRGFSSKGDGRGCYSLGLDDQQIFPEVDLDRVKRTQGMNITWVTTAQTDVECTTLLELMGLRFKKAQ</sequence>
<feature type="chain" id="PRO_0000242986" description="Large ribosomal subunit protein uL5">
    <location>
        <begin position="1"/>
        <end position="180"/>
    </location>
</feature>
<proteinExistence type="inferred from homology"/>
<name>RL5_CHLAB</name>
<comment type="function">
    <text evidence="1">This is one of the proteins that bind and probably mediate the attachment of the 5S RNA into the large ribosomal subunit, where it forms part of the central protuberance. In the 70S ribosome it contacts protein S13 of the 30S subunit (bridge B1b), connecting the 2 subunits; this bridge is implicated in subunit movement. Contacts the P site tRNA; the 5S rRNA and some of its associated proteins might help stabilize positioning of ribosome-bound tRNAs.</text>
</comment>
<comment type="subunit">
    <text evidence="1">Part of the 50S ribosomal subunit; part of the 5S rRNA/L5/L18/L25 subcomplex. Contacts the 5S rRNA and the P site tRNA. Forms a bridge to the 30S subunit in the 70S ribosome.</text>
</comment>
<comment type="similarity">
    <text evidence="1">Belongs to the universal ribosomal protein uL5 family.</text>
</comment>
<evidence type="ECO:0000255" key="1">
    <source>
        <dbReference type="HAMAP-Rule" id="MF_01333"/>
    </source>
</evidence>
<evidence type="ECO:0000305" key="2"/>
<organism>
    <name type="scientific">Chlamydia abortus (strain DSM 27085 / S26/3)</name>
    <name type="common">Chlamydophila abortus</name>
    <dbReference type="NCBI Taxonomy" id="218497"/>
    <lineage>
        <taxon>Bacteria</taxon>
        <taxon>Pseudomonadati</taxon>
        <taxon>Chlamydiota</taxon>
        <taxon>Chlamydiia</taxon>
        <taxon>Chlamydiales</taxon>
        <taxon>Chlamydiaceae</taxon>
        <taxon>Chlamydia/Chlamydophila group</taxon>
        <taxon>Chlamydia</taxon>
    </lineage>
</organism>
<gene>
    <name evidence="1" type="primary">rplE</name>
    <name type="ordered locus">CAB104</name>
</gene>
<accession>Q5L708</accession>
<reference key="1">
    <citation type="journal article" date="2005" name="Genome Res.">
        <title>The Chlamydophila abortus genome sequence reveals an array of variable proteins that contribute to interspecies variation.</title>
        <authorList>
            <person name="Thomson N.R."/>
            <person name="Yeats C."/>
            <person name="Bell K."/>
            <person name="Holden M.T.G."/>
            <person name="Bentley S.D."/>
            <person name="Livingstone M."/>
            <person name="Cerdeno-Tarraga A.-M."/>
            <person name="Harris B."/>
            <person name="Doggett J."/>
            <person name="Ormond D."/>
            <person name="Mungall K."/>
            <person name="Clarke K."/>
            <person name="Feltwell T."/>
            <person name="Hance Z."/>
            <person name="Sanders M."/>
            <person name="Quail M.A."/>
            <person name="Price C."/>
            <person name="Barrell B.G."/>
            <person name="Parkhill J."/>
            <person name="Longbottom D."/>
        </authorList>
    </citation>
    <scope>NUCLEOTIDE SEQUENCE [LARGE SCALE GENOMIC DNA]</scope>
    <source>
        <strain>DSM 27085 / S26/3</strain>
    </source>
</reference>
<protein>
    <recommendedName>
        <fullName evidence="1">Large ribosomal subunit protein uL5</fullName>
    </recommendedName>
    <alternativeName>
        <fullName evidence="2">50S ribosomal protein L5</fullName>
    </alternativeName>
</protein>
<dbReference type="EMBL" id="CR848038">
    <property type="protein sequence ID" value="CAH63562.1"/>
    <property type="molecule type" value="Genomic_DNA"/>
</dbReference>
<dbReference type="RefSeq" id="WP_011096831.1">
    <property type="nucleotide sequence ID" value="NC_004552.2"/>
</dbReference>
<dbReference type="SMR" id="Q5L708"/>
<dbReference type="KEGG" id="cab:CAB104"/>
<dbReference type="eggNOG" id="COG0094">
    <property type="taxonomic scope" value="Bacteria"/>
</dbReference>
<dbReference type="HOGENOM" id="CLU_061015_2_1_0"/>
<dbReference type="OrthoDB" id="9806626at2"/>
<dbReference type="Proteomes" id="UP000001012">
    <property type="component" value="Chromosome"/>
</dbReference>
<dbReference type="GO" id="GO:1990904">
    <property type="term" value="C:ribonucleoprotein complex"/>
    <property type="evidence" value="ECO:0007669"/>
    <property type="project" value="UniProtKB-KW"/>
</dbReference>
<dbReference type="GO" id="GO:0005840">
    <property type="term" value="C:ribosome"/>
    <property type="evidence" value="ECO:0007669"/>
    <property type="project" value="UniProtKB-KW"/>
</dbReference>
<dbReference type="GO" id="GO:0019843">
    <property type="term" value="F:rRNA binding"/>
    <property type="evidence" value="ECO:0007669"/>
    <property type="project" value="UniProtKB-UniRule"/>
</dbReference>
<dbReference type="GO" id="GO:0003735">
    <property type="term" value="F:structural constituent of ribosome"/>
    <property type="evidence" value="ECO:0007669"/>
    <property type="project" value="InterPro"/>
</dbReference>
<dbReference type="GO" id="GO:0000049">
    <property type="term" value="F:tRNA binding"/>
    <property type="evidence" value="ECO:0007669"/>
    <property type="project" value="UniProtKB-UniRule"/>
</dbReference>
<dbReference type="GO" id="GO:0006412">
    <property type="term" value="P:translation"/>
    <property type="evidence" value="ECO:0007669"/>
    <property type="project" value="UniProtKB-UniRule"/>
</dbReference>
<dbReference type="FunFam" id="3.30.1440.10:FF:000001">
    <property type="entry name" value="50S ribosomal protein L5"/>
    <property type="match status" value="1"/>
</dbReference>
<dbReference type="Gene3D" id="3.30.1440.10">
    <property type="match status" value="1"/>
</dbReference>
<dbReference type="HAMAP" id="MF_01333_B">
    <property type="entry name" value="Ribosomal_uL5_B"/>
    <property type="match status" value="1"/>
</dbReference>
<dbReference type="InterPro" id="IPR002132">
    <property type="entry name" value="Ribosomal_uL5"/>
</dbReference>
<dbReference type="InterPro" id="IPR020930">
    <property type="entry name" value="Ribosomal_uL5_bac-type"/>
</dbReference>
<dbReference type="InterPro" id="IPR031309">
    <property type="entry name" value="Ribosomal_uL5_C"/>
</dbReference>
<dbReference type="InterPro" id="IPR020929">
    <property type="entry name" value="Ribosomal_uL5_CS"/>
</dbReference>
<dbReference type="InterPro" id="IPR022803">
    <property type="entry name" value="Ribosomal_uL5_dom_sf"/>
</dbReference>
<dbReference type="InterPro" id="IPR031310">
    <property type="entry name" value="Ribosomal_uL5_N"/>
</dbReference>
<dbReference type="NCBIfam" id="NF000585">
    <property type="entry name" value="PRK00010.1"/>
    <property type="match status" value="1"/>
</dbReference>
<dbReference type="PANTHER" id="PTHR11994">
    <property type="entry name" value="60S RIBOSOMAL PROTEIN L11-RELATED"/>
    <property type="match status" value="1"/>
</dbReference>
<dbReference type="Pfam" id="PF00281">
    <property type="entry name" value="Ribosomal_L5"/>
    <property type="match status" value="1"/>
</dbReference>
<dbReference type="Pfam" id="PF00673">
    <property type="entry name" value="Ribosomal_L5_C"/>
    <property type="match status" value="1"/>
</dbReference>
<dbReference type="PIRSF" id="PIRSF002161">
    <property type="entry name" value="Ribosomal_L5"/>
    <property type="match status" value="1"/>
</dbReference>
<dbReference type="SUPFAM" id="SSF55282">
    <property type="entry name" value="RL5-like"/>
    <property type="match status" value="1"/>
</dbReference>
<dbReference type="PROSITE" id="PS00358">
    <property type="entry name" value="RIBOSOMAL_L5"/>
    <property type="match status" value="1"/>
</dbReference>